<keyword id="KW-0963">Cytoplasm</keyword>
<keyword id="KW-0488">Methylation</keyword>
<keyword id="KW-0507">mRNA processing</keyword>
<keyword id="KW-0508">mRNA splicing</keyword>
<keyword id="KW-0539">Nucleus</keyword>
<keyword id="KW-1185">Reference proteome</keyword>
<keyword id="KW-0694">RNA-binding</keyword>
<name>RFOX1_BOVIN</name>
<reference key="1">
    <citation type="submission" date="2006-06" db="EMBL/GenBank/DDBJ databases">
        <authorList>
            <consortium name="NIH - Mammalian Gene Collection (MGC) project"/>
        </authorList>
    </citation>
    <scope>NUCLEOTIDE SEQUENCE [LARGE SCALE MRNA]</scope>
    <source>
        <strain>Hereford</strain>
        <tissue>Fetal cerebellum</tissue>
    </source>
</reference>
<evidence type="ECO:0000250" key="1"/>
<evidence type="ECO:0000250" key="2">
    <source>
        <dbReference type="UniProtKB" id="Q9JJ43"/>
    </source>
</evidence>
<evidence type="ECO:0000255" key="3">
    <source>
        <dbReference type="PROSITE-ProRule" id="PRU00176"/>
    </source>
</evidence>
<evidence type="ECO:0000256" key="4">
    <source>
        <dbReference type="SAM" id="MobiDB-lite"/>
    </source>
</evidence>
<accession>Q17QD3</accession>
<dbReference type="EMBL" id="BC118423">
    <property type="protein sequence ID" value="AAI18424.1"/>
    <property type="molecule type" value="mRNA"/>
</dbReference>
<dbReference type="RefSeq" id="NP_001069286.1">
    <property type="nucleotide sequence ID" value="NM_001075818.2"/>
</dbReference>
<dbReference type="SMR" id="Q17QD3"/>
<dbReference type="STRING" id="9913.ENSBTAP00000069783"/>
<dbReference type="PaxDb" id="9913-ENSBTAP00000009490"/>
<dbReference type="GeneID" id="521304"/>
<dbReference type="KEGG" id="bta:521304"/>
<dbReference type="CTD" id="54715"/>
<dbReference type="eggNOG" id="KOG0125">
    <property type="taxonomic scope" value="Eukaryota"/>
</dbReference>
<dbReference type="InParanoid" id="Q17QD3"/>
<dbReference type="OrthoDB" id="5382468at2759"/>
<dbReference type="Proteomes" id="UP000009136">
    <property type="component" value="Unplaced"/>
</dbReference>
<dbReference type="GO" id="GO:0005737">
    <property type="term" value="C:cytoplasm"/>
    <property type="evidence" value="ECO:0000318"/>
    <property type="project" value="GO_Central"/>
</dbReference>
<dbReference type="GO" id="GO:0005634">
    <property type="term" value="C:nucleus"/>
    <property type="evidence" value="ECO:0000318"/>
    <property type="project" value="GO_Central"/>
</dbReference>
<dbReference type="GO" id="GO:0003729">
    <property type="term" value="F:mRNA binding"/>
    <property type="evidence" value="ECO:0000318"/>
    <property type="project" value="GO_Central"/>
</dbReference>
<dbReference type="GO" id="GO:0006397">
    <property type="term" value="P:mRNA processing"/>
    <property type="evidence" value="ECO:0007669"/>
    <property type="project" value="UniProtKB-KW"/>
</dbReference>
<dbReference type="GO" id="GO:0007399">
    <property type="term" value="P:nervous system development"/>
    <property type="evidence" value="ECO:0000318"/>
    <property type="project" value="GO_Central"/>
</dbReference>
<dbReference type="GO" id="GO:0000381">
    <property type="term" value="P:regulation of alternative mRNA splicing, via spliceosome"/>
    <property type="evidence" value="ECO:0000318"/>
    <property type="project" value="GO_Central"/>
</dbReference>
<dbReference type="GO" id="GO:0008380">
    <property type="term" value="P:RNA splicing"/>
    <property type="evidence" value="ECO:0007669"/>
    <property type="project" value="UniProtKB-KW"/>
</dbReference>
<dbReference type="FunFam" id="3.30.70.330:FF:000375">
    <property type="entry name" value="RNA binding fox-1 homolog 1"/>
    <property type="match status" value="1"/>
</dbReference>
<dbReference type="Gene3D" id="3.30.70.330">
    <property type="match status" value="2"/>
</dbReference>
<dbReference type="InterPro" id="IPR025670">
    <property type="entry name" value="Fox-1_C_dom"/>
</dbReference>
<dbReference type="InterPro" id="IPR012677">
    <property type="entry name" value="Nucleotide-bd_a/b_plait_sf"/>
</dbReference>
<dbReference type="InterPro" id="IPR035979">
    <property type="entry name" value="RBD_domain_sf"/>
</dbReference>
<dbReference type="InterPro" id="IPR017325">
    <property type="entry name" value="RBFOX1-3"/>
</dbReference>
<dbReference type="InterPro" id="IPR047131">
    <property type="entry name" value="RBFOX1-like"/>
</dbReference>
<dbReference type="InterPro" id="IPR000504">
    <property type="entry name" value="RRM_dom"/>
</dbReference>
<dbReference type="PANTHER" id="PTHR15597">
    <property type="entry name" value="ATAXIN 2-BINDING PROTEIN 1-RELATED"/>
    <property type="match status" value="1"/>
</dbReference>
<dbReference type="PANTHER" id="PTHR15597:SF45">
    <property type="entry name" value="RNA BINDING PROTEIN FOX-1 HOMOLOG 1"/>
    <property type="match status" value="1"/>
</dbReference>
<dbReference type="Pfam" id="PF12414">
    <property type="entry name" value="Fox-1_C"/>
    <property type="match status" value="1"/>
</dbReference>
<dbReference type="Pfam" id="PF00076">
    <property type="entry name" value="RRM_1"/>
    <property type="match status" value="1"/>
</dbReference>
<dbReference type="PIRSF" id="PIRSF037932">
    <property type="entry name" value="Ataxin_2_bd_A2BP"/>
    <property type="match status" value="1"/>
</dbReference>
<dbReference type="SMART" id="SM00360">
    <property type="entry name" value="RRM"/>
    <property type="match status" value="1"/>
</dbReference>
<dbReference type="SUPFAM" id="SSF54928">
    <property type="entry name" value="RNA-binding domain, RBD"/>
    <property type="match status" value="1"/>
</dbReference>
<dbReference type="PROSITE" id="PS50102">
    <property type="entry name" value="RRM"/>
    <property type="match status" value="1"/>
</dbReference>
<protein>
    <recommendedName>
        <fullName>RNA binding protein fox-1 homolog 1</fullName>
    </recommendedName>
    <alternativeName>
        <fullName>Ataxin-2-binding protein 1</fullName>
    </alternativeName>
    <alternativeName>
        <fullName>Fox-1 homolog A</fullName>
    </alternativeName>
</protein>
<gene>
    <name type="primary">RBFOX1</name>
    <name type="synonym">A2BP1</name>
    <name type="synonym">FOX1</name>
</gene>
<proteinExistence type="evidence at transcript level"/>
<sequence length="355" mass="38175">MNCEREQLRGNQEAAAAPDTMAQPYASAQFAPPQNGIPAEYTAPHPHPAPEYTGQTTVPEHTLNLYPPAQSHSEQSAADTSAHTVSGTATTDDSAPTDGQPQTQPSENTENKSQPKRLHVSNIPFRFRDPDLRQMFGGFGFVTFENSADADRAREKLHGTVVEGRKIEVNNATARVMTNKKTVNPYTNGWKLNPVVGAVYSPEFYAGTVLLCQANQEGSSMYSAPSSLVYTSAMPGFPYPAATAAAAYRGAHLRGRGRTVYNTFRAAAPPPPIPAYGGVVYQDGFYGADIYGGYAAYRYAQPTPATAAAYSDRNQFVFVAADEISCNTSAVTDEFMLPTPTTTHLLQPPPTALVP</sequence>
<organism>
    <name type="scientific">Bos taurus</name>
    <name type="common">Bovine</name>
    <dbReference type="NCBI Taxonomy" id="9913"/>
    <lineage>
        <taxon>Eukaryota</taxon>
        <taxon>Metazoa</taxon>
        <taxon>Chordata</taxon>
        <taxon>Craniata</taxon>
        <taxon>Vertebrata</taxon>
        <taxon>Euteleostomi</taxon>
        <taxon>Mammalia</taxon>
        <taxon>Eutheria</taxon>
        <taxon>Laurasiatheria</taxon>
        <taxon>Artiodactyla</taxon>
        <taxon>Ruminantia</taxon>
        <taxon>Pecora</taxon>
        <taxon>Bovidae</taxon>
        <taxon>Bovinae</taxon>
        <taxon>Bos</taxon>
    </lineage>
</organism>
<feature type="chain" id="PRO_0000317109" description="RNA binding protein fox-1 homolog 1">
    <location>
        <begin position="1"/>
        <end position="355"/>
    </location>
</feature>
<feature type="domain" description="RRM" evidence="3">
    <location>
        <begin position="116"/>
        <end position="174"/>
    </location>
</feature>
<feature type="region of interest" description="Disordered" evidence="4">
    <location>
        <begin position="1"/>
        <end position="123"/>
    </location>
</feature>
<feature type="compositionally biased region" description="Polar residues" evidence="4">
    <location>
        <begin position="70"/>
        <end position="112"/>
    </location>
</feature>
<feature type="site" description="Interaction with RNA" evidence="1">
    <location>
        <position position="117"/>
    </location>
</feature>
<feature type="site" description="Interaction with RNA" evidence="1">
    <location>
        <position position="125"/>
    </location>
</feature>
<feature type="site" description="Interaction with RNA" evidence="1">
    <location>
        <position position="126"/>
    </location>
</feature>
<feature type="site" description="Interaction with RNA" evidence="1">
    <location>
        <position position="141"/>
    </location>
</feature>
<feature type="site" description="Interaction with RNA" evidence="1">
    <location>
        <position position="165"/>
    </location>
</feature>
<feature type="site" description="Interaction with RNA" evidence="1">
    <location>
        <position position="175"/>
    </location>
</feature>
<feature type="modified residue" description="Asymmetric dimethylarginine" evidence="2">
    <location>
        <position position="298"/>
    </location>
</feature>
<comment type="function">
    <text evidence="1">RNA-binding protein that regulates alternative splicing events by binding to 5'-UGCAUGU-3' elements. Prevents binding of U2AF2 to the 3'-splice site. Regulates alternative splicing of tissue-specific exons and of differentially spliced exons during erythropoiesis (By similarity).</text>
</comment>
<comment type="subunit">
    <text evidence="1">Binds to the C-terminus of ATXN2.</text>
</comment>
<comment type="subcellular location">
    <subcellularLocation>
        <location evidence="1">Nucleus</location>
    </subcellularLocation>
    <subcellularLocation>
        <location evidence="1">Cytoplasm</location>
    </subcellularLocation>
</comment>